<sequence>MSKEEFMKIQTCVLKVNIHCDGCKQKVKKILQKIEGVFTTKIDSEQGKVTVSGSVDPSVLIKKLAKSGKHAEIWGAPKGNNNPNQSQMANQFKGMQIDHGKAGGGGGGNNNNNKKGQKNGGGGGGGGGGGNSNAPKMGQQLNPQHLQQLQQLQKMKGFQDLKLPPQLKGSVPVNKNQNQKGVKFDVPEDDDDDDFSDEFDDEFTDDDDDEFDDEFDDLPLPSNKMKPNMTMMPNAQQMMMNAQKNANLAGGPAKNGGKGAPAAGGGGAGGGKGAGGGAKGGPGNQNQGGGKNGGGGHPQDGKNGGGGGGPNAGKKGNGGGGPMAGGVSGGFRPMGGGGPQNMSMPMGGQMGMGGPMGNMPAVQGLPATGPGGAPQGYFQGAGIDPMQMQQQQQQQQYLAAVMNQQRAMGNERFQPMMYARPPPAVNYMPPNPHQYPNPHPYPYPYPYPYPPPYGNDQYSHAFSDENTSSCDIM</sequence>
<reference key="1">
    <citation type="journal article" date="2000" name="Nature">
        <title>Sequence and analysis of chromosome 3 of the plant Arabidopsis thaliana.</title>
        <authorList>
            <person name="Salanoubat M."/>
            <person name="Lemcke K."/>
            <person name="Rieger M."/>
            <person name="Ansorge W."/>
            <person name="Unseld M."/>
            <person name="Fartmann B."/>
            <person name="Valle G."/>
            <person name="Bloecker H."/>
            <person name="Perez-Alonso M."/>
            <person name="Obermaier B."/>
            <person name="Delseny M."/>
            <person name="Boutry M."/>
            <person name="Grivell L.A."/>
            <person name="Mache R."/>
            <person name="Puigdomenech P."/>
            <person name="De Simone V."/>
            <person name="Choisne N."/>
            <person name="Artiguenave F."/>
            <person name="Robert C."/>
            <person name="Brottier P."/>
            <person name="Wincker P."/>
            <person name="Cattolico L."/>
            <person name="Weissenbach J."/>
            <person name="Saurin W."/>
            <person name="Quetier F."/>
            <person name="Schaefer M."/>
            <person name="Mueller-Auer S."/>
            <person name="Gabel C."/>
            <person name="Fuchs M."/>
            <person name="Benes V."/>
            <person name="Wurmbach E."/>
            <person name="Drzonek H."/>
            <person name="Erfle H."/>
            <person name="Jordan N."/>
            <person name="Bangert S."/>
            <person name="Wiedelmann R."/>
            <person name="Kranz H."/>
            <person name="Voss H."/>
            <person name="Holland R."/>
            <person name="Brandt P."/>
            <person name="Nyakatura G."/>
            <person name="Vezzi A."/>
            <person name="D'Angelo M."/>
            <person name="Pallavicini A."/>
            <person name="Toppo S."/>
            <person name="Simionati B."/>
            <person name="Conrad A."/>
            <person name="Hornischer K."/>
            <person name="Kauer G."/>
            <person name="Loehnert T.-H."/>
            <person name="Nordsiek G."/>
            <person name="Reichelt J."/>
            <person name="Scharfe M."/>
            <person name="Schoen O."/>
            <person name="Bargues M."/>
            <person name="Terol J."/>
            <person name="Climent J."/>
            <person name="Navarro P."/>
            <person name="Collado C."/>
            <person name="Perez-Perez A."/>
            <person name="Ottenwaelder B."/>
            <person name="Duchemin D."/>
            <person name="Cooke R."/>
            <person name="Laudie M."/>
            <person name="Berger-Llauro C."/>
            <person name="Purnelle B."/>
            <person name="Masuy D."/>
            <person name="de Haan M."/>
            <person name="Maarse A.C."/>
            <person name="Alcaraz J.-P."/>
            <person name="Cottet A."/>
            <person name="Casacuberta E."/>
            <person name="Monfort A."/>
            <person name="Argiriou A."/>
            <person name="Flores M."/>
            <person name="Liguori R."/>
            <person name="Vitale D."/>
            <person name="Mannhaupt G."/>
            <person name="Haase D."/>
            <person name="Schoof H."/>
            <person name="Rudd S."/>
            <person name="Zaccaria P."/>
            <person name="Mewes H.-W."/>
            <person name="Mayer K.F.X."/>
            <person name="Kaul S."/>
            <person name="Town C.D."/>
            <person name="Koo H.L."/>
            <person name="Tallon L.J."/>
            <person name="Jenkins J."/>
            <person name="Rooney T."/>
            <person name="Rizzo M."/>
            <person name="Walts A."/>
            <person name="Utterback T."/>
            <person name="Fujii C.Y."/>
            <person name="Shea T.P."/>
            <person name="Creasy T.H."/>
            <person name="Haas B."/>
            <person name="Maiti R."/>
            <person name="Wu D."/>
            <person name="Peterson J."/>
            <person name="Van Aken S."/>
            <person name="Pai G."/>
            <person name="Militscher J."/>
            <person name="Sellers P."/>
            <person name="Gill J.E."/>
            <person name="Feldblyum T.V."/>
            <person name="Preuss D."/>
            <person name="Lin X."/>
            <person name="Nierman W.C."/>
            <person name="Salzberg S.L."/>
            <person name="White O."/>
            <person name="Venter J.C."/>
            <person name="Fraser C.M."/>
            <person name="Kaneko T."/>
            <person name="Nakamura Y."/>
            <person name="Sato S."/>
            <person name="Kato T."/>
            <person name="Asamizu E."/>
            <person name="Sasamoto S."/>
            <person name="Kimura T."/>
            <person name="Idesawa K."/>
            <person name="Kawashima K."/>
            <person name="Kishida Y."/>
            <person name="Kiyokawa C."/>
            <person name="Kohara M."/>
            <person name="Matsumoto M."/>
            <person name="Matsuno A."/>
            <person name="Muraki A."/>
            <person name="Nakayama S."/>
            <person name="Nakazaki N."/>
            <person name="Shinpo S."/>
            <person name="Takeuchi C."/>
            <person name="Wada T."/>
            <person name="Watanabe A."/>
            <person name="Yamada M."/>
            <person name="Yasuda M."/>
            <person name="Tabata S."/>
        </authorList>
    </citation>
    <scope>NUCLEOTIDE SEQUENCE [LARGE SCALE GENOMIC DNA]</scope>
    <source>
        <strain>cv. Columbia</strain>
    </source>
</reference>
<reference key="2">
    <citation type="journal article" date="2017" name="Plant J.">
        <title>Araport11: a complete reannotation of the Arabidopsis thaliana reference genome.</title>
        <authorList>
            <person name="Cheng C.Y."/>
            <person name="Krishnakumar V."/>
            <person name="Chan A.P."/>
            <person name="Thibaud-Nissen F."/>
            <person name="Schobel S."/>
            <person name="Town C.D."/>
        </authorList>
    </citation>
    <scope>GENOME REANNOTATION</scope>
    <source>
        <strain>cv. Columbia</strain>
    </source>
</reference>
<reference key="3">
    <citation type="journal article" date="2003" name="Science">
        <title>Empirical analysis of transcriptional activity in the Arabidopsis genome.</title>
        <authorList>
            <person name="Yamada K."/>
            <person name="Lim J."/>
            <person name="Dale J.M."/>
            <person name="Chen H."/>
            <person name="Shinn P."/>
            <person name="Palm C.J."/>
            <person name="Southwick A.M."/>
            <person name="Wu H.C."/>
            <person name="Kim C.J."/>
            <person name="Nguyen M."/>
            <person name="Pham P.K."/>
            <person name="Cheuk R.F."/>
            <person name="Karlin-Newmann G."/>
            <person name="Liu S.X."/>
            <person name="Lam B."/>
            <person name="Sakano H."/>
            <person name="Wu T."/>
            <person name="Yu G."/>
            <person name="Miranda M."/>
            <person name="Quach H.L."/>
            <person name="Tripp M."/>
            <person name="Chang C.H."/>
            <person name="Lee J.M."/>
            <person name="Toriumi M.J."/>
            <person name="Chan M.M."/>
            <person name="Tang C.C."/>
            <person name="Onodera C.S."/>
            <person name="Deng J.M."/>
            <person name="Akiyama K."/>
            <person name="Ansari Y."/>
            <person name="Arakawa T."/>
            <person name="Banh J."/>
            <person name="Banno F."/>
            <person name="Bowser L."/>
            <person name="Brooks S.Y."/>
            <person name="Carninci P."/>
            <person name="Chao Q."/>
            <person name="Choy N."/>
            <person name="Enju A."/>
            <person name="Goldsmith A.D."/>
            <person name="Gurjal M."/>
            <person name="Hansen N.F."/>
            <person name="Hayashizaki Y."/>
            <person name="Johnson-Hopson C."/>
            <person name="Hsuan V.W."/>
            <person name="Iida K."/>
            <person name="Karnes M."/>
            <person name="Khan S."/>
            <person name="Koesema E."/>
            <person name="Ishida J."/>
            <person name="Jiang P.X."/>
            <person name="Jones T."/>
            <person name="Kawai J."/>
            <person name="Kamiya A."/>
            <person name="Meyers C."/>
            <person name="Nakajima M."/>
            <person name="Narusaka M."/>
            <person name="Seki M."/>
            <person name="Sakurai T."/>
            <person name="Satou M."/>
            <person name="Tamse R."/>
            <person name="Vaysberg M."/>
            <person name="Wallender E.K."/>
            <person name="Wong C."/>
            <person name="Yamamura Y."/>
            <person name="Yuan S."/>
            <person name="Shinozaki K."/>
            <person name="Davis R.W."/>
            <person name="Theologis A."/>
            <person name="Ecker J.R."/>
        </authorList>
    </citation>
    <scope>NUCLEOTIDE SEQUENCE [LARGE SCALE MRNA]</scope>
    <source>
        <strain>cv. Columbia</strain>
    </source>
</reference>
<reference key="4">
    <citation type="journal article" date="2010" name="Metallomics">
        <title>Metallochaperone-like genes in Arabidopsis thaliana.</title>
        <authorList>
            <person name="Tehseen M."/>
            <person name="Cairns N."/>
            <person name="Sherson S."/>
            <person name="Cobbett C.S."/>
        </authorList>
    </citation>
    <scope>GENE FAMILY</scope>
    <scope>NOMENCLATURE</scope>
</reference>
<reference key="5">
    <citation type="journal article" date="2013" name="FEBS J.">
        <title>Heavy metal-associated isoprenylated plant protein (HIPP): characterization of a family of proteins exclusive to plants.</title>
        <authorList>
            <person name="de Abreu-Neto J.B."/>
            <person name="Turchetto-Zolet A.C."/>
            <person name="de Oliveira L.F."/>
            <person name="Zanettini M.H."/>
            <person name="Margis-Pinheiro M."/>
        </authorList>
    </citation>
    <scope>GENE FAMILY</scope>
    <scope>NOMENCLATURE</scope>
    <scope>INDUCTION BY CADMIUM</scope>
</reference>
<comment type="function">
    <text evidence="1">Heavy-metal-binding protein.</text>
</comment>
<comment type="alternative products">
    <event type="alternative splicing"/>
    <isoform>
        <id>Q9M8K5-1</id>
        <name>1</name>
        <sequence type="displayed"/>
    </isoform>
    <text evidence="7">A number of isoforms are produced. According to EST sequences.</text>
</comment>
<comment type="induction">
    <text evidence="6">Down-regulated by cadmium.</text>
</comment>
<comment type="similarity">
    <text evidence="7">Belongs to the HIPP family.</text>
</comment>
<feature type="chain" id="PRO_0000437841" description="Heavy metal-associated isoprenylated plant protein 32">
    <location>
        <begin position="1"/>
        <end position="470"/>
    </location>
</feature>
<feature type="propeptide" id="PRO_0000437842" description="Removed in mature form" evidence="7">
    <location>
        <begin position="471"/>
        <end position="473"/>
    </location>
</feature>
<feature type="domain" description="HMA" evidence="3">
    <location>
        <begin position="9"/>
        <end position="72"/>
    </location>
</feature>
<feature type="region of interest" description="Disordered" evidence="4">
    <location>
        <begin position="96"/>
        <end position="139"/>
    </location>
</feature>
<feature type="region of interest" description="Disordered" evidence="4">
    <location>
        <begin position="162"/>
        <end position="230"/>
    </location>
</feature>
<feature type="region of interest" description="Disordered" evidence="4">
    <location>
        <begin position="246"/>
        <end position="343"/>
    </location>
</feature>
<feature type="compositionally biased region" description="Gly residues" evidence="4">
    <location>
        <begin position="118"/>
        <end position="131"/>
    </location>
</feature>
<feature type="compositionally biased region" description="Acidic residues" evidence="4">
    <location>
        <begin position="187"/>
        <end position="217"/>
    </location>
</feature>
<feature type="compositionally biased region" description="Gly residues" evidence="4">
    <location>
        <begin position="253"/>
        <end position="339"/>
    </location>
</feature>
<feature type="binding site" evidence="3">
    <location>
        <position position="20"/>
    </location>
    <ligand>
        <name>a metal cation</name>
        <dbReference type="ChEBI" id="CHEBI:25213"/>
    </ligand>
</feature>
<feature type="binding site" evidence="3">
    <location>
        <position position="23"/>
    </location>
    <ligand>
        <name>a metal cation</name>
        <dbReference type="ChEBI" id="CHEBI:25213"/>
    </ligand>
</feature>
<feature type="modified residue" description="Cysteine methyl ester" evidence="2">
    <location>
        <position position="470"/>
    </location>
</feature>
<feature type="lipid moiety-binding region" description="S-farnesyl cysteine" evidence="2">
    <location>
        <position position="470"/>
    </location>
</feature>
<organism>
    <name type="scientific">Arabidopsis thaliana</name>
    <name type="common">Mouse-ear cress</name>
    <dbReference type="NCBI Taxonomy" id="3702"/>
    <lineage>
        <taxon>Eukaryota</taxon>
        <taxon>Viridiplantae</taxon>
        <taxon>Streptophyta</taxon>
        <taxon>Embryophyta</taxon>
        <taxon>Tracheophyta</taxon>
        <taxon>Spermatophyta</taxon>
        <taxon>Magnoliopsida</taxon>
        <taxon>eudicotyledons</taxon>
        <taxon>Gunneridae</taxon>
        <taxon>Pentapetalae</taxon>
        <taxon>rosids</taxon>
        <taxon>malvids</taxon>
        <taxon>Brassicales</taxon>
        <taxon>Brassicaceae</taxon>
        <taxon>Camelineae</taxon>
        <taxon>Arabidopsis</taxon>
    </lineage>
</organism>
<keyword id="KW-0025">Alternative splicing</keyword>
<keyword id="KW-0449">Lipoprotein</keyword>
<keyword id="KW-0479">Metal-binding</keyword>
<keyword id="KW-0488">Methylation</keyword>
<keyword id="KW-0636">Prenylation</keyword>
<keyword id="KW-1185">Reference proteome</keyword>
<accession>Q9M8K5</accession>
<gene>
    <name evidence="5 6" type="primary">HIPP32</name>
    <name evidence="8" type="ordered locus">At3g06130</name>
    <name evidence="9" type="ORF">F28L1.7</name>
</gene>
<name>HIP32_ARATH</name>
<protein>
    <recommendedName>
        <fullName evidence="5 6">Heavy metal-associated isoprenylated plant protein 32</fullName>
        <shortName evidence="5 6">AtHIP32</shortName>
    </recommendedName>
</protein>
<proteinExistence type="evidence at transcript level"/>
<dbReference type="EMBL" id="AC018907">
    <property type="protein sequence ID" value="AAF30306.1"/>
    <property type="molecule type" value="Genomic_DNA"/>
</dbReference>
<dbReference type="EMBL" id="CP002686">
    <property type="protein sequence ID" value="AEE74348.1"/>
    <property type="molecule type" value="Genomic_DNA"/>
</dbReference>
<dbReference type="EMBL" id="AF326899">
    <property type="protein sequence ID" value="AAG41481.1"/>
    <property type="molecule type" value="mRNA"/>
</dbReference>
<dbReference type="EMBL" id="AF349519">
    <property type="protein sequence ID" value="AAK15566.1"/>
    <property type="molecule type" value="mRNA"/>
</dbReference>
<dbReference type="EMBL" id="AY045685">
    <property type="protein sequence ID" value="AAK74043.1"/>
    <property type="molecule type" value="mRNA"/>
</dbReference>
<dbReference type="EMBL" id="AY149962">
    <property type="protein sequence ID" value="AAN31116.1"/>
    <property type="molecule type" value="mRNA"/>
</dbReference>
<dbReference type="RefSeq" id="NP_566273.1">
    <molecule id="Q9M8K5-1"/>
    <property type="nucleotide sequence ID" value="NM_111488.4"/>
</dbReference>
<dbReference type="SMR" id="Q9M8K5"/>
<dbReference type="FunCoup" id="Q9M8K5">
    <property type="interactions" value="674"/>
</dbReference>
<dbReference type="STRING" id="3702.Q9M8K5"/>
<dbReference type="PaxDb" id="3702-AT3G06130.1"/>
<dbReference type="ProteomicsDB" id="230192">
    <molecule id="Q9M8K5-1"/>
</dbReference>
<dbReference type="EnsemblPlants" id="AT3G06130.1">
    <molecule id="Q9M8K5-1"/>
    <property type="protein sequence ID" value="AT3G06130.1"/>
    <property type="gene ID" value="AT3G06130"/>
</dbReference>
<dbReference type="GeneID" id="819786"/>
<dbReference type="Gramene" id="AT3G06130.1">
    <molecule id="Q9M8K5-1"/>
    <property type="protein sequence ID" value="AT3G06130.1"/>
    <property type="gene ID" value="AT3G06130"/>
</dbReference>
<dbReference type="KEGG" id="ath:AT3G06130"/>
<dbReference type="Araport" id="AT3G06130"/>
<dbReference type="TAIR" id="AT3G06130"/>
<dbReference type="eggNOG" id="KOG1603">
    <property type="taxonomic scope" value="Eukaryota"/>
</dbReference>
<dbReference type="HOGENOM" id="CLU_017291_1_0_1"/>
<dbReference type="InParanoid" id="Q9M8K5"/>
<dbReference type="OMA" id="EGFHPMM"/>
<dbReference type="PRO" id="PR:Q9M8K5"/>
<dbReference type="Proteomes" id="UP000006548">
    <property type="component" value="Chromosome 3"/>
</dbReference>
<dbReference type="ExpressionAtlas" id="Q9M8K5">
    <property type="expression patterns" value="baseline and differential"/>
</dbReference>
<dbReference type="GO" id="GO:0009505">
    <property type="term" value="C:plant-type cell wall"/>
    <property type="evidence" value="ECO:0007005"/>
    <property type="project" value="TAIR"/>
</dbReference>
<dbReference type="GO" id="GO:0046872">
    <property type="term" value="F:metal ion binding"/>
    <property type="evidence" value="ECO:0007669"/>
    <property type="project" value="UniProtKB-KW"/>
</dbReference>
<dbReference type="CDD" id="cd00371">
    <property type="entry name" value="HMA"/>
    <property type="match status" value="1"/>
</dbReference>
<dbReference type="FunFam" id="3.30.70.100:FF:000008">
    <property type="entry name" value="Copper transport protein ATOX1"/>
    <property type="match status" value="1"/>
</dbReference>
<dbReference type="Gene3D" id="3.30.70.100">
    <property type="match status" value="1"/>
</dbReference>
<dbReference type="InterPro" id="IPR006121">
    <property type="entry name" value="HMA_dom"/>
</dbReference>
<dbReference type="InterPro" id="IPR036163">
    <property type="entry name" value="HMA_dom_sf"/>
</dbReference>
<dbReference type="PANTHER" id="PTHR45868:SF85">
    <property type="entry name" value="HEAVY METAL-ASSOCIATED ISOPRENYLATED PLANT PROTEIN 32"/>
    <property type="match status" value="1"/>
</dbReference>
<dbReference type="PANTHER" id="PTHR45868">
    <property type="entry name" value="HEAVY METAL-ASSOCIATED ISOPRENYLATED PLANT PROTEIN 33-RELATED"/>
    <property type="match status" value="1"/>
</dbReference>
<dbReference type="Pfam" id="PF00403">
    <property type="entry name" value="HMA"/>
    <property type="match status" value="1"/>
</dbReference>
<dbReference type="SUPFAM" id="SSF55008">
    <property type="entry name" value="HMA, heavy metal-associated domain"/>
    <property type="match status" value="1"/>
</dbReference>
<dbReference type="PROSITE" id="PS50846">
    <property type="entry name" value="HMA_2"/>
    <property type="match status" value="1"/>
</dbReference>
<evidence type="ECO:0000250" key="1">
    <source>
        <dbReference type="UniProtKB" id="Q9LZF1"/>
    </source>
</evidence>
<evidence type="ECO:0000250" key="2">
    <source>
        <dbReference type="UniProtKB" id="Q9SZN7"/>
    </source>
</evidence>
<evidence type="ECO:0000255" key="3">
    <source>
        <dbReference type="PROSITE-ProRule" id="PRU00280"/>
    </source>
</evidence>
<evidence type="ECO:0000256" key="4">
    <source>
        <dbReference type="SAM" id="MobiDB-lite"/>
    </source>
</evidence>
<evidence type="ECO:0000303" key="5">
    <source>
    </source>
</evidence>
<evidence type="ECO:0000303" key="6">
    <source>
    </source>
</evidence>
<evidence type="ECO:0000305" key="7"/>
<evidence type="ECO:0000312" key="8">
    <source>
        <dbReference type="Araport" id="AT3G06130"/>
    </source>
</evidence>
<evidence type="ECO:0000312" key="9">
    <source>
        <dbReference type="EMBL" id="AAF30306.1"/>
    </source>
</evidence>